<name>PSTB_METMA</name>
<organism>
    <name type="scientific">Methanosarcina mazei (strain ATCC BAA-159 / DSM 3647 / Goe1 / Go1 / JCM 11833 / OCM 88)</name>
    <name type="common">Methanosarcina frisia</name>
    <dbReference type="NCBI Taxonomy" id="192952"/>
    <lineage>
        <taxon>Archaea</taxon>
        <taxon>Methanobacteriati</taxon>
        <taxon>Methanobacteriota</taxon>
        <taxon>Stenosarchaea group</taxon>
        <taxon>Methanomicrobia</taxon>
        <taxon>Methanosarcinales</taxon>
        <taxon>Methanosarcinaceae</taxon>
        <taxon>Methanosarcina</taxon>
    </lineage>
</organism>
<comment type="function">
    <text evidence="1">Part of the ABC transporter complex PstSACB involved in phosphate import. Responsible for energy coupling to the transport system.</text>
</comment>
<comment type="catalytic activity">
    <reaction evidence="1">
        <text>phosphate(out) + ATP + H2O = ADP + 2 phosphate(in) + H(+)</text>
        <dbReference type="Rhea" id="RHEA:24440"/>
        <dbReference type="ChEBI" id="CHEBI:15377"/>
        <dbReference type="ChEBI" id="CHEBI:15378"/>
        <dbReference type="ChEBI" id="CHEBI:30616"/>
        <dbReference type="ChEBI" id="CHEBI:43474"/>
        <dbReference type="ChEBI" id="CHEBI:456216"/>
        <dbReference type="EC" id="7.3.2.1"/>
    </reaction>
</comment>
<comment type="subunit">
    <text evidence="1">The complex is composed of two ATP-binding proteins (PstB), two transmembrane proteins (PstC and PstA) and a solute-binding protein (PstS).</text>
</comment>
<comment type="subcellular location">
    <subcellularLocation>
        <location evidence="1">Cell membrane</location>
        <topology evidence="1">Peripheral membrane protein</topology>
    </subcellularLocation>
</comment>
<comment type="similarity">
    <text evidence="1">Belongs to the ABC transporter superfamily. Phosphate importer (TC 3.A.1.7) family.</text>
</comment>
<gene>
    <name evidence="1" type="primary">pstB</name>
    <name type="ordered locus">MM_2009</name>
</gene>
<sequence length="258" mass="28977">MTEVVQNVAQTHITVENLNLWYGEKQALKNVSLKIPRNSVTALIGPSGCGKSTFIRCLNRMNDLVKNCRIEGKVLIENEDIYGTDVDVVELRKQVGMVFQKPNPFPMSIYDNVAYGPRIHGVNKKDIDGVVRNALRSAALFEETSDRLKSPALSLSGGQQQRLCIARTLAVKPRIILFDEPTSALDPISTARIEDLIMNLKKDYTIVIVTHNMQQAARISDYTGFFLMGELVEFGQTRQIFHSPREKSTEDYITGRFG</sequence>
<feature type="chain" id="PRO_0000092948" description="Phosphate import ATP-binding protein PstB">
    <location>
        <begin position="1"/>
        <end position="258"/>
    </location>
</feature>
<feature type="domain" description="ABC transporter" evidence="1">
    <location>
        <begin position="13"/>
        <end position="253"/>
    </location>
</feature>
<feature type="binding site" evidence="1">
    <location>
        <begin position="45"/>
        <end position="52"/>
    </location>
    <ligand>
        <name>ATP</name>
        <dbReference type="ChEBI" id="CHEBI:30616"/>
    </ligand>
</feature>
<accession>Q8PVF6</accession>
<dbReference type="EC" id="7.3.2.1" evidence="1"/>
<dbReference type="EMBL" id="AE008384">
    <property type="protein sequence ID" value="AAM31705.1"/>
    <property type="molecule type" value="Genomic_DNA"/>
</dbReference>
<dbReference type="RefSeq" id="WP_011033941.1">
    <property type="nucleotide sequence ID" value="NC_003901.1"/>
</dbReference>
<dbReference type="SMR" id="Q8PVF6"/>
<dbReference type="GeneID" id="24840421"/>
<dbReference type="KEGG" id="mma:MM_2009"/>
<dbReference type="PATRIC" id="fig|192952.21.peg.2311"/>
<dbReference type="eggNOG" id="arCOG00231">
    <property type="taxonomic scope" value="Archaea"/>
</dbReference>
<dbReference type="HOGENOM" id="CLU_000604_1_22_2"/>
<dbReference type="Proteomes" id="UP000000595">
    <property type="component" value="Chromosome"/>
</dbReference>
<dbReference type="GO" id="GO:0005886">
    <property type="term" value="C:plasma membrane"/>
    <property type="evidence" value="ECO:0007669"/>
    <property type="project" value="UniProtKB-SubCell"/>
</dbReference>
<dbReference type="GO" id="GO:0005524">
    <property type="term" value="F:ATP binding"/>
    <property type="evidence" value="ECO:0007669"/>
    <property type="project" value="UniProtKB-KW"/>
</dbReference>
<dbReference type="GO" id="GO:0016887">
    <property type="term" value="F:ATP hydrolysis activity"/>
    <property type="evidence" value="ECO:0007669"/>
    <property type="project" value="InterPro"/>
</dbReference>
<dbReference type="GO" id="GO:0015415">
    <property type="term" value="F:ATPase-coupled phosphate ion transmembrane transporter activity"/>
    <property type="evidence" value="ECO:0007669"/>
    <property type="project" value="UniProtKB-EC"/>
</dbReference>
<dbReference type="GO" id="GO:0035435">
    <property type="term" value="P:phosphate ion transmembrane transport"/>
    <property type="evidence" value="ECO:0007669"/>
    <property type="project" value="InterPro"/>
</dbReference>
<dbReference type="CDD" id="cd03260">
    <property type="entry name" value="ABC_PstB_phosphate_transporter"/>
    <property type="match status" value="1"/>
</dbReference>
<dbReference type="FunFam" id="3.40.50.300:FF:000132">
    <property type="entry name" value="Phosphate import ATP-binding protein PstB"/>
    <property type="match status" value="1"/>
</dbReference>
<dbReference type="Gene3D" id="3.40.50.300">
    <property type="entry name" value="P-loop containing nucleotide triphosphate hydrolases"/>
    <property type="match status" value="1"/>
</dbReference>
<dbReference type="InterPro" id="IPR003593">
    <property type="entry name" value="AAA+_ATPase"/>
</dbReference>
<dbReference type="InterPro" id="IPR003439">
    <property type="entry name" value="ABC_transporter-like_ATP-bd"/>
</dbReference>
<dbReference type="InterPro" id="IPR017871">
    <property type="entry name" value="ABC_transporter-like_CS"/>
</dbReference>
<dbReference type="InterPro" id="IPR027417">
    <property type="entry name" value="P-loop_NTPase"/>
</dbReference>
<dbReference type="InterPro" id="IPR005670">
    <property type="entry name" value="PstB-like"/>
</dbReference>
<dbReference type="NCBIfam" id="TIGR00972">
    <property type="entry name" value="3a0107s01c2"/>
    <property type="match status" value="1"/>
</dbReference>
<dbReference type="PANTHER" id="PTHR43423">
    <property type="entry name" value="ABC TRANSPORTER I FAMILY MEMBER 17"/>
    <property type="match status" value="1"/>
</dbReference>
<dbReference type="PANTHER" id="PTHR43423:SF1">
    <property type="entry name" value="ABC TRANSPORTER I FAMILY MEMBER 17"/>
    <property type="match status" value="1"/>
</dbReference>
<dbReference type="Pfam" id="PF00005">
    <property type="entry name" value="ABC_tran"/>
    <property type="match status" value="1"/>
</dbReference>
<dbReference type="SMART" id="SM00382">
    <property type="entry name" value="AAA"/>
    <property type="match status" value="1"/>
</dbReference>
<dbReference type="SUPFAM" id="SSF52540">
    <property type="entry name" value="P-loop containing nucleoside triphosphate hydrolases"/>
    <property type="match status" value="1"/>
</dbReference>
<dbReference type="PROSITE" id="PS00211">
    <property type="entry name" value="ABC_TRANSPORTER_1"/>
    <property type="match status" value="1"/>
</dbReference>
<dbReference type="PROSITE" id="PS50893">
    <property type="entry name" value="ABC_TRANSPORTER_2"/>
    <property type="match status" value="1"/>
</dbReference>
<dbReference type="PROSITE" id="PS51238">
    <property type="entry name" value="PSTB"/>
    <property type="match status" value="1"/>
</dbReference>
<evidence type="ECO:0000255" key="1">
    <source>
        <dbReference type="HAMAP-Rule" id="MF_01702"/>
    </source>
</evidence>
<reference key="1">
    <citation type="journal article" date="2002" name="J. Mol. Microbiol. Biotechnol.">
        <title>The genome of Methanosarcina mazei: evidence for lateral gene transfer between Bacteria and Archaea.</title>
        <authorList>
            <person name="Deppenmeier U."/>
            <person name="Johann A."/>
            <person name="Hartsch T."/>
            <person name="Merkl R."/>
            <person name="Schmitz R.A."/>
            <person name="Martinez-Arias R."/>
            <person name="Henne A."/>
            <person name="Wiezer A."/>
            <person name="Baeumer S."/>
            <person name="Jacobi C."/>
            <person name="Brueggemann H."/>
            <person name="Lienard T."/>
            <person name="Christmann A."/>
            <person name="Boemecke M."/>
            <person name="Steckel S."/>
            <person name="Bhattacharyya A."/>
            <person name="Lykidis A."/>
            <person name="Overbeek R."/>
            <person name="Klenk H.-P."/>
            <person name="Gunsalus R.P."/>
            <person name="Fritz H.-J."/>
            <person name="Gottschalk G."/>
        </authorList>
    </citation>
    <scope>NUCLEOTIDE SEQUENCE [LARGE SCALE GENOMIC DNA]</scope>
    <source>
        <strain>ATCC BAA-159 / DSM 3647 / Goe1 / Go1 / JCM 11833 / OCM 88</strain>
    </source>
</reference>
<keyword id="KW-0067">ATP-binding</keyword>
<keyword id="KW-1003">Cell membrane</keyword>
<keyword id="KW-0472">Membrane</keyword>
<keyword id="KW-0547">Nucleotide-binding</keyword>
<keyword id="KW-0592">Phosphate transport</keyword>
<keyword id="KW-1278">Translocase</keyword>
<keyword id="KW-0813">Transport</keyword>
<proteinExistence type="inferred from homology"/>
<protein>
    <recommendedName>
        <fullName evidence="1">Phosphate import ATP-binding protein PstB</fullName>
        <ecNumber evidence="1">7.3.2.1</ecNumber>
    </recommendedName>
    <alternativeName>
        <fullName evidence="1">ABC phosphate transporter</fullName>
    </alternativeName>
    <alternativeName>
        <fullName evidence="1">Phosphate-transporting ATPase</fullName>
    </alternativeName>
</protein>